<accession>Q9LST7</accession>
<accession>A0A0P0WZ61</accession>
<accession>Q0DAN3</accession>
<accession>Q67WV4</accession>
<proteinExistence type="evidence at transcript level"/>
<protein>
    <recommendedName>
        <fullName>Proteasome subunit beta type-3</fullName>
    </recommendedName>
    <alternativeName>
        <fullName>20S proteasome alpha subunit C</fullName>
    </alternativeName>
    <alternativeName>
        <fullName>20S proteasome subunit beta-3</fullName>
    </alternativeName>
</protein>
<evidence type="ECO:0000250" key="1"/>
<evidence type="ECO:0000255" key="2">
    <source>
        <dbReference type="PROSITE-ProRule" id="PRU00809"/>
    </source>
</evidence>
<evidence type="ECO:0000305" key="3"/>
<evidence type="ECO:0000312" key="4">
    <source>
        <dbReference type="EMBL" id="BAF20090.1"/>
    </source>
</evidence>
<evidence type="ECO:0000312" key="5">
    <source>
        <dbReference type="EMBL" id="EEE66098.1"/>
    </source>
</evidence>
<reference key="1">
    <citation type="journal article" date="2000" name="Gene">
        <title>Primary structural features of the 20S proteasome subunits of rice (Oryza sativa).</title>
        <authorList>
            <person name="Sassa H."/>
            <person name="Oguchi S."/>
            <person name="Inoue T."/>
            <person name="Hirano H."/>
        </authorList>
    </citation>
    <scope>NUCLEOTIDE SEQUENCE [MRNA]</scope>
    <source>
        <strain>cv. Nipponbare</strain>
    </source>
</reference>
<reference key="2">
    <citation type="journal article" date="2005" name="Nature">
        <title>The map-based sequence of the rice genome.</title>
        <authorList>
            <consortium name="International rice genome sequencing project (IRGSP)"/>
        </authorList>
    </citation>
    <scope>NUCLEOTIDE SEQUENCE [LARGE SCALE GENOMIC DNA]</scope>
    <source>
        <strain>cv. Nipponbare</strain>
    </source>
</reference>
<reference key="3">
    <citation type="journal article" date="2008" name="Nucleic Acids Res.">
        <title>The rice annotation project database (RAP-DB): 2008 update.</title>
        <authorList>
            <consortium name="The rice annotation project (RAP)"/>
        </authorList>
    </citation>
    <scope>GENOME REANNOTATION</scope>
    <source>
        <strain>cv. Nipponbare</strain>
    </source>
</reference>
<reference key="4">
    <citation type="journal article" date="2013" name="Rice">
        <title>Improvement of the Oryza sativa Nipponbare reference genome using next generation sequence and optical map data.</title>
        <authorList>
            <person name="Kawahara Y."/>
            <person name="de la Bastide M."/>
            <person name="Hamilton J.P."/>
            <person name="Kanamori H."/>
            <person name="McCombie W.R."/>
            <person name="Ouyang S."/>
            <person name="Schwartz D.C."/>
            <person name="Tanaka T."/>
            <person name="Wu J."/>
            <person name="Zhou S."/>
            <person name="Childs K.L."/>
            <person name="Davidson R.M."/>
            <person name="Lin H."/>
            <person name="Quesada-Ocampo L."/>
            <person name="Vaillancourt B."/>
            <person name="Sakai H."/>
            <person name="Lee S.S."/>
            <person name="Kim J."/>
            <person name="Numa H."/>
            <person name="Itoh T."/>
            <person name="Buell C.R."/>
            <person name="Matsumoto T."/>
        </authorList>
    </citation>
    <scope>GENOME REANNOTATION</scope>
    <source>
        <strain>cv. Nipponbare</strain>
    </source>
</reference>
<reference key="5">
    <citation type="journal article" date="2005" name="PLoS Biol.">
        <title>The genomes of Oryza sativa: a history of duplications.</title>
        <authorList>
            <person name="Yu J."/>
            <person name="Wang J."/>
            <person name="Lin W."/>
            <person name="Li S."/>
            <person name="Li H."/>
            <person name="Zhou J."/>
            <person name="Ni P."/>
            <person name="Dong W."/>
            <person name="Hu S."/>
            <person name="Zeng C."/>
            <person name="Zhang J."/>
            <person name="Zhang Y."/>
            <person name="Li R."/>
            <person name="Xu Z."/>
            <person name="Li S."/>
            <person name="Li X."/>
            <person name="Zheng H."/>
            <person name="Cong L."/>
            <person name="Lin L."/>
            <person name="Yin J."/>
            <person name="Geng J."/>
            <person name="Li G."/>
            <person name="Shi J."/>
            <person name="Liu J."/>
            <person name="Lv H."/>
            <person name="Li J."/>
            <person name="Wang J."/>
            <person name="Deng Y."/>
            <person name="Ran L."/>
            <person name="Shi X."/>
            <person name="Wang X."/>
            <person name="Wu Q."/>
            <person name="Li C."/>
            <person name="Ren X."/>
            <person name="Wang J."/>
            <person name="Wang X."/>
            <person name="Li D."/>
            <person name="Liu D."/>
            <person name="Zhang X."/>
            <person name="Ji Z."/>
            <person name="Zhao W."/>
            <person name="Sun Y."/>
            <person name="Zhang Z."/>
            <person name="Bao J."/>
            <person name="Han Y."/>
            <person name="Dong L."/>
            <person name="Ji J."/>
            <person name="Chen P."/>
            <person name="Wu S."/>
            <person name="Liu J."/>
            <person name="Xiao Y."/>
            <person name="Bu D."/>
            <person name="Tan J."/>
            <person name="Yang L."/>
            <person name="Ye C."/>
            <person name="Zhang J."/>
            <person name="Xu J."/>
            <person name="Zhou Y."/>
            <person name="Yu Y."/>
            <person name="Zhang B."/>
            <person name="Zhuang S."/>
            <person name="Wei H."/>
            <person name="Liu B."/>
            <person name="Lei M."/>
            <person name="Yu H."/>
            <person name="Li Y."/>
            <person name="Xu H."/>
            <person name="Wei S."/>
            <person name="He X."/>
            <person name="Fang L."/>
            <person name="Zhang Z."/>
            <person name="Zhang Y."/>
            <person name="Huang X."/>
            <person name="Su Z."/>
            <person name="Tong W."/>
            <person name="Li J."/>
            <person name="Tong Z."/>
            <person name="Li S."/>
            <person name="Ye J."/>
            <person name="Wang L."/>
            <person name="Fang L."/>
            <person name="Lei T."/>
            <person name="Chen C.-S."/>
            <person name="Chen H.-C."/>
            <person name="Xu Z."/>
            <person name="Li H."/>
            <person name="Huang H."/>
            <person name="Zhang F."/>
            <person name="Xu H."/>
            <person name="Li N."/>
            <person name="Zhao C."/>
            <person name="Li S."/>
            <person name="Dong L."/>
            <person name="Huang Y."/>
            <person name="Li L."/>
            <person name="Xi Y."/>
            <person name="Qi Q."/>
            <person name="Li W."/>
            <person name="Zhang B."/>
            <person name="Hu W."/>
            <person name="Zhang Y."/>
            <person name="Tian X."/>
            <person name="Jiao Y."/>
            <person name="Liang X."/>
            <person name="Jin J."/>
            <person name="Gao L."/>
            <person name="Zheng W."/>
            <person name="Hao B."/>
            <person name="Liu S.-M."/>
            <person name="Wang W."/>
            <person name="Yuan L."/>
            <person name="Cao M."/>
            <person name="McDermott J."/>
            <person name="Samudrala R."/>
            <person name="Wang J."/>
            <person name="Wong G.K.-S."/>
            <person name="Yang H."/>
        </authorList>
    </citation>
    <scope>NUCLEOTIDE SEQUENCE [LARGE SCALE GENOMIC DNA]</scope>
    <source>
        <strain>cv. Nipponbare</strain>
    </source>
</reference>
<feature type="chain" id="PRO_0000148067" description="Proteasome subunit beta type-3">
    <location>
        <begin position="1"/>
        <end position="204"/>
    </location>
</feature>
<sequence>MSIFEYNGSAVVAMVGKNCFAIASDRRLGVQLQTVATDFQRVFKIHDKLYIGLSGLATDAQTLYQRLVFRHKLYQLREERDMKPQTFASLVSALLYEKRFGPYFCQPVIAGLGEDNEPFICTMDCIGAKELAKDFVVSGTASESLYGACESMYKPNMEPEELFETISQALQSSVDRDCLSGWGGFVLLVTPTEVKECVIKGRMD</sequence>
<keyword id="KW-0963">Cytoplasm</keyword>
<keyword id="KW-0539">Nucleus</keyword>
<keyword id="KW-0647">Proteasome</keyword>
<keyword id="KW-1185">Reference proteome</keyword>
<name>PSB3_ORYSJ</name>
<gene>
    <name type="primary">PBC1</name>
    <name evidence="4" type="ordered locus">Os06g0643100</name>
    <name evidence="3" type="ordered locus">LOC_Os06g43570</name>
    <name evidence="5" type="ORF">OsJ_22127</name>
    <name type="ORF">P0416A11.24</name>
</gene>
<dbReference type="EMBL" id="AB026565">
    <property type="protein sequence ID" value="BAA96836.1"/>
    <property type="molecule type" value="mRNA"/>
</dbReference>
<dbReference type="EMBL" id="AP003523">
    <property type="protein sequence ID" value="BAD37365.1"/>
    <property type="molecule type" value="Genomic_DNA"/>
</dbReference>
<dbReference type="EMBL" id="AP008212">
    <property type="protein sequence ID" value="BAF20090.1"/>
    <property type="molecule type" value="Genomic_DNA"/>
</dbReference>
<dbReference type="EMBL" id="AP014962">
    <property type="protein sequence ID" value="BAS98828.1"/>
    <property type="molecule type" value="Genomic_DNA"/>
</dbReference>
<dbReference type="EMBL" id="CM000143">
    <property type="protein sequence ID" value="EEE66098.1"/>
    <property type="molecule type" value="Genomic_DNA"/>
</dbReference>
<dbReference type="RefSeq" id="XP_015641231.1">
    <property type="nucleotide sequence ID" value="XM_015785745.1"/>
</dbReference>
<dbReference type="SMR" id="Q9LST7"/>
<dbReference type="FunCoup" id="Q9LST7">
    <property type="interactions" value="3317"/>
</dbReference>
<dbReference type="STRING" id="39947.Q9LST7"/>
<dbReference type="MEROPS" id="T01.P02"/>
<dbReference type="PaxDb" id="39947-Q9LST7"/>
<dbReference type="EnsemblPlants" id="Os06t0643100-01">
    <property type="protein sequence ID" value="Os06t0643100-01"/>
    <property type="gene ID" value="Os06g0643100"/>
</dbReference>
<dbReference type="Gramene" id="Os06t0643100-01">
    <property type="protein sequence ID" value="Os06t0643100-01"/>
    <property type="gene ID" value="Os06g0643100"/>
</dbReference>
<dbReference type="KEGG" id="dosa:Os06g0643100"/>
<dbReference type="eggNOG" id="KOG0180">
    <property type="taxonomic scope" value="Eukaryota"/>
</dbReference>
<dbReference type="HOGENOM" id="CLU_035750_10_0_1"/>
<dbReference type="InParanoid" id="Q9LST7"/>
<dbReference type="OMA" id="CSEQLYG"/>
<dbReference type="OrthoDB" id="204949at2759"/>
<dbReference type="Proteomes" id="UP000000763">
    <property type="component" value="Chromosome 6"/>
</dbReference>
<dbReference type="Proteomes" id="UP000007752">
    <property type="component" value="Chromosome 6"/>
</dbReference>
<dbReference type="Proteomes" id="UP000059680">
    <property type="component" value="Chromosome 6"/>
</dbReference>
<dbReference type="GO" id="GO:0005829">
    <property type="term" value="C:cytosol"/>
    <property type="evidence" value="ECO:0000318"/>
    <property type="project" value="GO_Central"/>
</dbReference>
<dbReference type="GO" id="GO:0005634">
    <property type="term" value="C:nucleus"/>
    <property type="evidence" value="ECO:0000318"/>
    <property type="project" value="GO_Central"/>
</dbReference>
<dbReference type="GO" id="GO:0019774">
    <property type="term" value="C:proteasome core complex, beta-subunit complex"/>
    <property type="evidence" value="ECO:0000250"/>
    <property type="project" value="UniProtKB"/>
</dbReference>
<dbReference type="GO" id="GO:0043161">
    <property type="term" value="P:proteasome-mediated ubiquitin-dependent protein catabolic process"/>
    <property type="evidence" value="ECO:0000318"/>
    <property type="project" value="GO_Central"/>
</dbReference>
<dbReference type="CDD" id="cd03759">
    <property type="entry name" value="proteasome_beta_type_3"/>
    <property type="match status" value="1"/>
</dbReference>
<dbReference type="FunFam" id="3.60.20.10:FF:000032">
    <property type="entry name" value="Proteasome subunit beta"/>
    <property type="match status" value="1"/>
</dbReference>
<dbReference type="Gene3D" id="3.60.20.10">
    <property type="entry name" value="Glutamine Phosphoribosylpyrophosphate, subunit 1, domain 1"/>
    <property type="match status" value="1"/>
</dbReference>
<dbReference type="InterPro" id="IPR029055">
    <property type="entry name" value="Ntn_hydrolases_N"/>
</dbReference>
<dbReference type="InterPro" id="IPR033811">
    <property type="entry name" value="Proteasome_beta_3"/>
</dbReference>
<dbReference type="InterPro" id="IPR016050">
    <property type="entry name" value="Proteasome_bsu_CS"/>
</dbReference>
<dbReference type="InterPro" id="IPR001353">
    <property type="entry name" value="Proteasome_sua/b"/>
</dbReference>
<dbReference type="InterPro" id="IPR023333">
    <property type="entry name" value="Proteasome_suB-type"/>
</dbReference>
<dbReference type="PANTHER" id="PTHR32194">
    <property type="entry name" value="METALLOPROTEASE TLDD"/>
    <property type="match status" value="1"/>
</dbReference>
<dbReference type="PANTHER" id="PTHR32194:SF10">
    <property type="entry name" value="PROTEASOME SUBUNIT BETA TYPE-3"/>
    <property type="match status" value="1"/>
</dbReference>
<dbReference type="Pfam" id="PF00227">
    <property type="entry name" value="Proteasome"/>
    <property type="match status" value="1"/>
</dbReference>
<dbReference type="SUPFAM" id="SSF56235">
    <property type="entry name" value="N-terminal nucleophile aminohydrolases (Ntn hydrolases)"/>
    <property type="match status" value="1"/>
</dbReference>
<dbReference type="PROSITE" id="PS00854">
    <property type="entry name" value="PROTEASOME_BETA_1"/>
    <property type="match status" value="1"/>
</dbReference>
<dbReference type="PROSITE" id="PS51476">
    <property type="entry name" value="PROTEASOME_BETA_2"/>
    <property type="match status" value="1"/>
</dbReference>
<comment type="function">
    <text>Non-catalytic component of the proteasome, a multicatalytic proteinase complex which is characterized by its ability to cleave peptides with Arg, Phe, Tyr, Leu, and Glu adjacent to the leaving group at neutral or slightly basic pH. The proteasome has an ATP-dependent proteolytic activity.</text>
</comment>
<comment type="subunit">
    <text evidence="1">The 26S proteasome consists of a 20S proteasome core and two 19S regulatory subunits. The 20S proteasome core is composed of 28 subunits that are arranged in four stacked rings, resulting in a barrel-shaped structure. The two end rings are each formed by seven alpha subunits, and the two central rings are each formed by seven beta subunits. The catalytic chamber with the active sites is on the inside of the barrel (By similarity).</text>
</comment>
<comment type="subcellular location">
    <subcellularLocation>
        <location evidence="2">Cytoplasm</location>
    </subcellularLocation>
    <subcellularLocation>
        <location evidence="1">Nucleus</location>
    </subcellularLocation>
</comment>
<comment type="similarity">
    <text evidence="2">Belongs to the peptidase T1B family.</text>
</comment>
<organism>
    <name type="scientific">Oryza sativa subsp. japonica</name>
    <name type="common">Rice</name>
    <dbReference type="NCBI Taxonomy" id="39947"/>
    <lineage>
        <taxon>Eukaryota</taxon>
        <taxon>Viridiplantae</taxon>
        <taxon>Streptophyta</taxon>
        <taxon>Embryophyta</taxon>
        <taxon>Tracheophyta</taxon>
        <taxon>Spermatophyta</taxon>
        <taxon>Magnoliopsida</taxon>
        <taxon>Liliopsida</taxon>
        <taxon>Poales</taxon>
        <taxon>Poaceae</taxon>
        <taxon>BOP clade</taxon>
        <taxon>Oryzoideae</taxon>
        <taxon>Oryzeae</taxon>
        <taxon>Oryzinae</taxon>
        <taxon>Oryza</taxon>
        <taxon>Oryza sativa</taxon>
    </lineage>
</organism>